<proteinExistence type="evidence at protein level"/>
<name>CYC3_MARSL</name>
<organism>
    <name type="scientific">Maridesulfovibrio salexigens</name>
    <name type="common">Desulfovibrio salexigens</name>
    <dbReference type="NCBI Taxonomy" id="880"/>
    <lineage>
        <taxon>Bacteria</taxon>
        <taxon>Pseudomonadati</taxon>
        <taxon>Thermodesulfobacteriota</taxon>
        <taxon>Desulfovibrionia</taxon>
        <taxon>Desulfovibrionales</taxon>
        <taxon>Desulfovibrionaceae</taxon>
        <taxon>Maridesulfovibrio</taxon>
    </lineage>
</organism>
<sequence length="106" mass="11306">VDAPADMVLKAPAGAKMTKAPVDFSHKGHAALDCTKCHHKWDGKAEVKKCSAEGCHVBTSKKGKKSTPKFYSAFHSKSDISCVGCHKALKKATGPTKCGDCHPKKK</sequence>
<reference key="1">
    <citation type="journal article" date="1979" name="Nature">
        <title>Structure and sequence of the multihaem cytochrome c3.</title>
        <authorList>
            <person name="Haser R."/>
            <person name="Pierrot M."/>
            <person name="Frey M."/>
            <person name="Payan F."/>
            <person name="Astier J.-P."/>
            <person name="Bruschi M."/>
            <person name="le Gall J."/>
        </authorList>
    </citation>
    <scope>PROTEIN SEQUENCE</scope>
</reference>
<feature type="chain" id="PRO_0000108361" description="Cytochrome c3">
    <location>
        <begin position="1"/>
        <end position="106"/>
    </location>
</feature>
<feature type="binding site" description="axial binding residue">
    <location>
        <position position="26"/>
    </location>
    <ligand>
        <name>heme c</name>
        <dbReference type="ChEBI" id="CHEBI:61717"/>
        <label>1</label>
    </ligand>
    <ligandPart>
        <name>Fe</name>
        <dbReference type="ChEBI" id="CHEBI:18248"/>
    </ligandPart>
</feature>
<feature type="binding site" description="axial binding residue">
    <location>
        <position position="29"/>
    </location>
    <ligand>
        <name>heme c</name>
        <dbReference type="ChEBI" id="CHEBI:61717"/>
        <label>3</label>
    </ligand>
    <ligandPart>
        <name>Fe</name>
        <dbReference type="ChEBI" id="CHEBI:18248"/>
    </ligandPart>
</feature>
<feature type="binding site" description="covalent">
    <location>
        <position position="34"/>
    </location>
    <ligand>
        <name>heme c</name>
        <dbReference type="ChEBI" id="CHEBI:61717"/>
        <label>1</label>
    </ligand>
</feature>
<feature type="binding site" description="covalent">
    <location>
        <position position="37"/>
    </location>
    <ligand>
        <name>heme c</name>
        <dbReference type="ChEBI" id="CHEBI:61717"/>
        <label>1</label>
    </ligand>
</feature>
<feature type="binding site" description="axial binding residue">
    <location>
        <position position="38"/>
    </location>
    <ligand>
        <name>heme c</name>
        <dbReference type="ChEBI" id="CHEBI:61717"/>
        <label>1</label>
    </ligand>
    <ligandPart>
        <name>Fe</name>
        <dbReference type="ChEBI" id="CHEBI:18248"/>
    </ligandPart>
</feature>
<feature type="binding site" description="axial binding residue">
    <location>
        <position position="39"/>
    </location>
    <ligand>
        <name>heme c</name>
        <dbReference type="ChEBI" id="CHEBI:61717"/>
        <label>2</label>
    </ligand>
    <ligandPart>
        <name>Fe</name>
        <dbReference type="ChEBI" id="CHEBI:18248"/>
    </ligandPart>
</feature>
<feature type="binding site" description="covalent">
    <location>
        <position position="50"/>
    </location>
    <ligand>
        <name>heme c</name>
        <dbReference type="ChEBI" id="CHEBI:61717"/>
        <label>2</label>
    </ligand>
</feature>
<feature type="binding site" description="covalent">
    <location>
        <position position="55"/>
    </location>
    <ligand>
        <name>heme c</name>
        <dbReference type="ChEBI" id="CHEBI:61717"/>
        <label>2</label>
    </ligand>
</feature>
<feature type="binding site" description="axial binding residue">
    <location>
        <position position="56"/>
    </location>
    <ligand>
        <name>heme c</name>
        <dbReference type="ChEBI" id="CHEBI:61717"/>
        <label>2</label>
    </ligand>
    <ligandPart>
        <name>Fe</name>
        <dbReference type="ChEBI" id="CHEBI:18248"/>
    </ligandPart>
</feature>
<feature type="binding site" description="axial binding residue">
    <location>
        <position position="75"/>
    </location>
    <ligand>
        <name>heme c</name>
        <dbReference type="ChEBI" id="CHEBI:61717"/>
        <label>4</label>
    </ligand>
    <ligandPart>
        <name>Fe</name>
        <dbReference type="ChEBI" id="CHEBI:18248"/>
    </ligandPart>
</feature>
<feature type="binding site" description="covalent">
    <location>
        <position position="82"/>
    </location>
    <ligand>
        <name>heme c</name>
        <dbReference type="ChEBI" id="CHEBI:61717"/>
        <label>3</label>
    </ligand>
</feature>
<feature type="binding site" description="covalent">
    <location>
        <position position="85"/>
    </location>
    <ligand>
        <name>heme c</name>
        <dbReference type="ChEBI" id="CHEBI:61717"/>
        <label>3</label>
    </ligand>
</feature>
<feature type="binding site" description="axial binding residue">
    <location>
        <position position="86"/>
    </location>
    <ligand>
        <name>heme c</name>
        <dbReference type="ChEBI" id="CHEBI:61717"/>
        <label>3</label>
    </ligand>
    <ligandPart>
        <name>Fe</name>
        <dbReference type="ChEBI" id="CHEBI:18248"/>
    </ligandPart>
</feature>
<feature type="binding site" description="covalent">
    <location>
        <position position="98"/>
    </location>
    <ligand>
        <name>heme c</name>
        <dbReference type="ChEBI" id="CHEBI:61717"/>
        <label>4</label>
    </ligand>
</feature>
<feature type="binding site" description="covalent">
    <location>
        <position position="101"/>
    </location>
    <ligand>
        <name>heme c</name>
        <dbReference type="ChEBI" id="CHEBI:61717"/>
        <label>4</label>
    </ligand>
</feature>
<feature type="binding site" description="axial binding residue">
    <location>
        <position position="102"/>
    </location>
    <ligand>
        <name>heme c</name>
        <dbReference type="ChEBI" id="CHEBI:61717"/>
        <label>4</label>
    </ligand>
    <ligandPart>
        <name>Fe</name>
        <dbReference type="ChEBI" id="CHEBI:18248"/>
    </ligandPart>
</feature>
<keyword id="KW-0903">Direct protein sequencing</keyword>
<keyword id="KW-0249">Electron transport</keyword>
<keyword id="KW-0349">Heme</keyword>
<keyword id="KW-0408">Iron</keyword>
<keyword id="KW-0479">Metal-binding</keyword>
<keyword id="KW-0763">Sulfate respiration</keyword>
<keyword id="KW-0813">Transport</keyword>
<protein>
    <recommendedName>
        <fullName>Cytochrome c3</fullName>
    </recommendedName>
</protein>
<dbReference type="PIR" id="A00128">
    <property type="entry name" value="CCDV3S"/>
</dbReference>
<dbReference type="GO" id="GO:0009055">
    <property type="term" value="F:electron transfer activity"/>
    <property type="evidence" value="ECO:0007669"/>
    <property type="project" value="InterPro"/>
</dbReference>
<dbReference type="GO" id="GO:0020037">
    <property type="term" value="F:heme binding"/>
    <property type="evidence" value="ECO:0007669"/>
    <property type="project" value="InterPro"/>
</dbReference>
<dbReference type="GO" id="GO:0046872">
    <property type="term" value="F:metal ion binding"/>
    <property type="evidence" value="ECO:0007669"/>
    <property type="project" value="UniProtKB-KW"/>
</dbReference>
<dbReference type="GO" id="GO:0009061">
    <property type="term" value="P:anaerobic respiration"/>
    <property type="evidence" value="ECO:0007669"/>
    <property type="project" value="UniProtKB-KW"/>
</dbReference>
<dbReference type="CDD" id="cd08168">
    <property type="entry name" value="Cytochrom_C3"/>
    <property type="match status" value="1"/>
</dbReference>
<dbReference type="Gene3D" id="3.90.10.10">
    <property type="entry name" value="Cytochrome C3"/>
    <property type="match status" value="1"/>
</dbReference>
<dbReference type="InterPro" id="IPR002322">
    <property type="entry name" value="Cyt_c_III"/>
</dbReference>
<dbReference type="InterPro" id="IPR020942">
    <property type="entry name" value="Cyt_c_III_dom"/>
</dbReference>
<dbReference type="InterPro" id="IPR036280">
    <property type="entry name" value="Multihaem_cyt_sf"/>
</dbReference>
<dbReference type="Pfam" id="PF02085">
    <property type="entry name" value="Cytochrom_CIII"/>
    <property type="match status" value="1"/>
</dbReference>
<dbReference type="PRINTS" id="PR00609">
    <property type="entry name" value="CYTOCHROMEC3"/>
</dbReference>
<dbReference type="SUPFAM" id="SSF48695">
    <property type="entry name" value="Multiheme cytochromes"/>
    <property type="match status" value="1"/>
</dbReference>
<dbReference type="PROSITE" id="PS51008">
    <property type="entry name" value="MULTIHEME_CYTC"/>
    <property type="match status" value="1"/>
</dbReference>
<comment type="function">
    <text>Participates in sulfate respiration coupled with phosphorylation by transferring electrons from the enzyme dehydrogenase to ferredoxin.</text>
</comment>
<comment type="PTM">
    <text>Binds 4 heme c groups per subunit.</text>
</comment>
<comment type="miscellaneous">
    <text>The second heme binding site has an unusual CXXXXCH motif.</text>
</comment>
<accession>P00135</accession>